<feature type="chain" id="PRO_1000008842" description="Elongation factor G">
    <location>
        <begin position="1"/>
        <end position="692"/>
    </location>
</feature>
<feature type="domain" description="tr-type G">
    <location>
        <begin position="8"/>
        <end position="283"/>
    </location>
</feature>
<feature type="binding site" evidence="1">
    <location>
        <begin position="17"/>
        <end position="24"/>
    </location>
    <ligand>
        <name>GTP</name>
        <dbReference type="ChEBI" id="CHEBI:37565"/>
    </ligand>
</feature>
<feature type="binding site" evidence="1">
    <location>
        <begin position="81"/>
        <end position="85"/>
    </location>
    <ligand>
        <name>GTP</name>
        <dbReference type="ChEBI" id="CHEBI:37565"/>
    </ligand>
</feature>
<feature type="binding site" evidence="1">
    <location>
        <begin position="135"/>
        <end position="138"/>
    </location>
    <ligand>
        <name>GTP</name>
        <dbReference type="ChEBI" id="CHEBI:37565"/>
    </ligand>
</feature>
<gene>
    <name evidence="1" type="primary">fusA</name>
    <name type="ordered locus">Mmc1_0844</name>
</gene>
<sequence>MAREIALDHVRNIGIMAHIDAGKTTVTERILYYTGRSHKIGEVHEGAATMDWMEQEQERGITITSAATTCFWKEHRINIIDTPGHVDFTIEVERSLRVLDGAVAVFCGVAGVQPQSETVWRQADRYGVPRLAFVNKMDRMGADFNKAVQTMKDRLKARAIPAQYPIGAEEDLRGMVDLITRKAYIFNDESLGAEFEVLDCPEDIEAEVEEAREALLEAALEQDDTLMEKYLEGEEITIAEFKSCMRRAVISSAFVPVFCGSAFKNKGVQLLLDAVVDYFPSPSDTPYIEGLLPDSEEAAVRKPSDEEPFAALAFKIMTDPFVGTLTFVRVYSGVMESGTSVLNASKDRKERIGRLMLMHANKREDIKEVRAGDICAVVGLKNTTTGETLCDPNKPIILEKMDFPAPVIAIAVEPKTKADQERMGVALQRLAQEDPSFRVEVDHETNQTIISGMGELHLEIIVDRMMREFKVDANVGQPQVAYRETITQMVEHESKFVRQSGGRGQFGHVWLRLEPNEPGAGYEFVDGIKGGVVPKEYIPAVKNGVGEAMANGVYVGFPMVDVKVTLFDGSYHEVDSSEMAFKIAGSMGLKEGAMKAKPVLLEPIMDVEVETPEDYMGDVMGDMNSRRGQIQGMEDSGNNRLVKAQVPLSGMFGYATDLRSMSQGRATFTMQFGHYAQVPKSIAEEIKAKTTG</sequence>
<protein>
    <recommendedName>
        <fullName evidence="1">Elongation factor G</fullName>
        <shortName evidence="1">EF-G</shortName>
    </recommendedName>
</protein>
<evidence type="ECO:0000255" key="1">
    <source>
        <dbReference type="HAMAP-Rule" id="MF_00054"/>
    </source>
</evidence>
<dbReference type="EMBL" id="CP000471">
    <property type="protein sequence ID" value="ABK43363.1"/>
    <property type="molecule type" value="Genomic_DNA"/>
</dbReference>
<dbReference type="RefSeq" id="WP_011712523.1">
    <property type="nucleotide sequence ID" value="NC_008576.1"/>
</dbReference>
<dbReference type="SMR" id="A0L5X0"/>
<dbReference type="STRING" id="156889.Mmc1_0844"/>
<dbReference type="KEGG" id="mgm:Mmc1_0844"/>
<dbReference type="eggNOG" id="COG0480">
    <property type="taxonomic scope" value="Bacteria"/>
</dbReference>
<dbReference type="HOGENOM" id="CLU_002794_4_1_5"/>
<dbReference type="OrthoDB" id="9802948at2"/>
<dbReference type="Proteomes" id="UP000002586">
    <property type="component" value="Chromosome"/>
</dbReference>
<dbReference type="GO" id="GO:0005737">
    <property type="term" value="C:cytoplasm"/>
    <property type="evidence" value="ECO:0007669"/>
    <property type="project" value="UniProtKB-SubCell"/>
</dbReference>
<dbReference type="GO" id="GO:0005525">
    <property type="term" value="F:GTP binding"/>
    <property type="evidence" value="ECO:0007669"/>
    <property type="project" value="UniProtKB-UniRule"/>
</dbReference>
<dbReference type="GO" id="GO:0003924">
    <property type="term" value="F:GTPase activity"/>
    <property type="evidence" value="ECO:0007669"/>
    <property type="project" value="InterPro"/>
</dbReference>
<dbReference type="GO" id="GO:0003746">
    <property type="term" value="F:translation elongation factor activity"/>
    <property type="evidence" value="ECO:0007669"/>
    <property type="project" value="UniProtKB-UniRule"/>
</dbReference>
<dbReference type="GO" id="GO:0032790">
    <property type="term" value="P:ribosome disassembly"/>
    <property type="evidence" value="ECO:0007669"/>
    <property type="project" value="TreeGrafter"/>
</dbReference>
<dbReference type="CDD" id="cd01886">
    <property type="entry name" value="EF-G"/>
    <property type="match status" value="1"/>
</dbReference>
<dbReference type="CDD" id="cd16262">
    <property type="entry name" value="EFG_III"/>
    <property type="match status" value="1"/>
</dbReference>
<dbReference type="CDD" id="cd01434">
    <property type="entry name" value="EFG_mtEFG1_IV"/>
    <property type="match status" value="1"/>
</dbReference>
<dbReference type="CDD" id="cd03713">
    <property type="entry name" value="EFG_mtEFG_C"/>
    <property type="match status" value="1"/>
</dbReference>
<dbReference type="CDD" id="cd04088">
    <property type="entry name" value="EFG_mtEFG_II"/>
    <property type="match status" value="1"/>
</dbReference>
<dbReference type="FunFam" id="2.40.30.10:FF:000006">
    <property type="entry name" value="Elongation factor G"/>
    <property type="match status" value="1"/>
</dbReference>
<dbReference type="FunFam" id="3.30.230.10:FF:000003">
    <property type="entry name" value="Elongation factor G"/>
    <property type="match status" value="1"/>
</dbReference>
<dbReference type="FunFam" id="3.30.70.240:FF:000001">
    <property type="entry name" value="Elongation factor G"/>
    <property type="match status" value="1"/>
</dbReference>
<dbReference type="FunFam" id="3.30.70.870:FF:000001">
    <property type="entry name" value="Elongation factor G"/>
    <property type="match status" value="1"/>
</dbReference>
<dbReference type="FunFam" id="3.40.50.300:FF:000029">
    <property type="entry name" value="Elongation factor G"/>
    <property type="match status" value="1"/>
</dbReference>
<dbReference type="Gene3D" id="3.30.230.10">
    <property type="match status" value="1"/>
</dbReference>
<dbReference type="Gene3D" id="3.30.70.240">
    <property type="match status" value="1"/>
</dbReference>
<dbReference type="Gene3D" id="3.30.70.870">
    <property type="entry name" value="Elongation Factor G (Translational Gtpase), domain 3"/>
    <property type="match status" value="1"/>
</dbReference>
<dbReference type="Gene3D" id="3.40.50.300">
    <property type="entry name" value="P-loop containing nucleotide triphosphate hydrolases"/>
    <property type="match status" value="1"/>
</dbReference>
<dbReference type="Gene3D" id="2.40.30.10">
    <property type="entry name" value="Translation factors"/>
    <property type="match status" value="1"/>
</dbReference>
<dbReference type="HAMAP" id="MF_00054_B">
    <property type="entry name" value="EF_G_EF_2_B"/>
    <property type="match status" value="1"/>
</dbReference>
<dbReference type="InterPro" id="IPR053905">
    <property type="entry name" value="EF-G-like_DII"/>
</dbReference>
<dbReference type="InterPro" id="IPR041095">
    <property type="entry name" value="EFG_II"/>
</dbReference>
<dbReference type="InterPro" id="IPR009022">
    <property type="entry name" value="EFG_III"/>
</dbReference>
<dbReference type="InterPro" id="IPR035647">
    <property type="entry name" value="EFG_III/V"/>
</dbReference>
<dbReference type="InterPro" id="IPR047872">
    <property type="entry name" value="EFG_IV"/>
</dbReference>
<dbReference type="InterPro" id="IPR035649">
    <property type="entry name" value="EFG_V"/>
</dbReference>
<dbReference type="InterPro" id="IPR000640">
    <property type="entry name" value="EFG_V-like"/>
</dbReference>
<dbReference type="InterPro" id="IPR031157">
    <property type="entry name" value="G_TR_CS"/>
</dbReference>
<dbReference type="InterPro" id="IPR027417">
    <property type="entry name" value="P-loop_NTPase"/>
</dbReference>
<dbReference type="InterPro" id="IPR020568">
    <property type="entry name" value="Ribosomal_Su5_D2-typ_SF"/>
</dbReference>
<dbReference type="InterPro" id="IPR014721">
    <property type="entry name" value="Ribsml_uS5_D2-typ_fold_subgr"/>
</dbReference>
<dbReference type="InterPro" id="IPR005225">
    <property type="entry name" value="Small_GTP-bd"/>
</dbReference>
<dbReference type="InterPro" id="IPR000795">
    <property type="entry name" value="T_Tr_GTP-bd_dom"/>
</dbReference>
<dbReference type="InterPro" id="IPR009000">
    <property type="entry name" value="Transl_B-barrel_sf"/>
</dbReference>
<dbReference type="InterPro" id="IPR004540">
    <property type="entry name" value="Transl_elong_EFG/EF2"/>
</dbReference>
<dbReference type="InterPro" id="IPR005517">
    <property type="entry name" value="Transl_elong_EFG/EF2_IV"/>
</dbReference>
<dbReference type="NCBIfam" id="TIGR00484">
    <property type="entry name" value="EF-G"/>
    <property type="match status" value="1"/>
</dbReference>
<dbReference type="NCBIfam" id="NF009379">
    <property type="entry name" value="PRK12740.1-3"/>
    <property type="match status" value="1"/>
</dbReference>
<dbReference type="NCBIfam" id="NF009381">
    <property type="entry name" value="PRK12740.1-5"/>
    <property type="match status" value="1"/>
</dbReference>
<dbReference type="NCBIfam" id="NF009891">
    <property type="entry name" value="PRK13351.1-1"/>
    <property type="match status" value="1"/>
</dbReference>
<dbReference type="NCBIfam" id="TIGR00231">
    <property type="entry name" value="small_GTP"/>
    <property type="match status" value="1"/>
</dbReference>
<dbReference type="PANTHER" id="PTHR43261:SF1">
    <property type="entry name" value="RIBOSOME-RELEASING FACTOR 2, MITOCHONDRIAL"/>
    <property type="match status" value="1"/>
</dbReference>
<dbReference type="PANTHER" id="PTHR43261">
    <property type="entry name" value="TRANSLATION ELONGATION FACTOR G-RELATED"/>
    <property type="match status" value="1"/>
</dbReference>
<dbReference type="Pfam" id="PF22042">
    <property type="entry name" value="EF-G_D2"/>
    <property type="match status" value="1"/>
</dbReference>
<dbReference type="Pfam" id="PF00679">
    <property type="entry name" value="EFG_C"/>
    <property type="match status" value="1"/>
</dbReference>
<dbReference type="Pfam" id="PF14492">
    <property type="entry name" value="EFG_III"/>
    <property type="match status" value="1"/>
</dbReference>
<dbReference type="Pfam" id="PF03764">
    <property type="entry name" value="EFG_IV"/>
    <property type="match status" value="1"/>
</dbReference>
<dbReference type="Pfam" id="PF00009">
    <property type="entry name" value="GTP_EFTU"/>
    <property type="match status" value="1"/>
</dbReference>
<dbReference type="PRINTS" id="PR00315">
    <property type="entry name" value="ELONGATNFCT"/>
</dbReference>
<dbReference type="SMART" id="SM00838">
    <property type="entry name" value="EFG_C"/>
    <property type="match status" value="1"/>
</dbReference>
<dbReference type="SMART" id="SM00889">
    <property type="entry name" value="EFG_IV"/>
    <property type="match status" value="1"/>
</dbReference>
<dbReference type="SUPFAM" id="SSF54980">
    <property type="entry name" value="EF-G C-terminal domain-like"/>
    <property type="match status" value="2"/>
</dbReference>
<dbReference type="SUPFAM" id="SSF52540">
    <property type="entry name" value="P-loop containing nucleoside triphosphate hydrolases"/>
    <property type="match status" value="1"/>
</dbReference>
<dbReference type="SUPFAM" id="SSF54211">
    <property type="entry name" value="Ribosomal protein S5 domain 2-like"/>
    <property type="match status" value="1"/>
</dbReference>
<dbReference type="SUPFAM" id="SSF50447">
    <property type="entry name" value="Translation proteins"/>
    <property type="match status" value="1"/>
</dbReference>
<dbReference type="PROSITE" id="PS00301">
    <property type="entry name" value="G_TR_1"/>
    <property type="match status" value="1"/>
</dbReference>
<dbReference type="PROSITE" id="PS51722">
    <property type="entry name" value="G_TR_2"/>
    <property type="match status" value="1"/>
</dbReference>
<comment type="function">
    <text evidence="1">Catalyzes the GTP-dependent ribosomal translocation step during translation elongation. During this step, the ribosome changes from the pre-translocational (PRE) to the post-translocational (POST) state as the newly formed A-site-bound peptidyl-tRNA and P-site-bound deacylated tRNA move to the P and E sites, respectively. Catalyzes the coordinated movement of the two tRNA molecules, the mRNA and conformational changes in the ribosome.</text>
</comment>
<comment type="subcellular location">
    <subcellularLocation>
        <location evidence="1">Cytoplasm</location>
    </subcellularLocation>
</comment>
<comment type="similarity">
    <text evidence="1">Belongs to the TRAFAC class translation factor GTPase superfamily. Classic translation factor GTPase family. EF-G/EF-2 subfamily.</text>
</comment>
<reference key="1">
    <citation type="journal article" date="2009" name="Appl. Environ. Microbiol.">
        <title>Complete genome sequence of the chemolithoautotrophic marine magnetotactic coccus strain MC-1.</title>
        <authorList>
            <person name="Schubbe S."/>
            <person name="Williams T.J."/>
            <person name="Xie G."/>
            <person name="Kiss H.E."/>
            <person name="Brettin T.S."/>
            <person name="Martinez D."/>
            <person name="Ross C.A."/>
            <person name="Schuler D."/>
            <person name="Cox B.L."/>
            <person name="Nealson K.H."/>
            <person name="Bazylinski D.A."/>
        </authorList>
    </citation>
    <scope>NUCLEOTIDE SEQUENCE [LARGE SCALE GENOMIC DNA]</scope>
    <source>
        <strain>ATCC BAA-1437 / JCM 17883 / MC-1</strain>
    </source>
</reference>
<name>EFG_MAGMM</name>
<proteinExistence type="inferred from homology"/>
<accession>A0L5X0</accession>
<organism>
    <name type="scientific">Magnetococcus marinus (strain ATCC BAA-1437 / JCM 17883 / MC-1)</name>
    <dbReference type="NCBI Taxonomy" id="156889"/>
    <lineage>
        <taxon>Bacteria</taxon>
        <taxon>Pseudomonadati</taxon>
        <taxon>Pseudomonadota</taxon>
        <taxon>Alphaproteobacteria</taxon>
        <taxon>Magnetococcales</taxon>
        <taxon>Magnetococcaceae</taxon>
        <taxon>Magnetococcus</taxon>
    </lineage>
</organism>
<keyword id="KW-0963">Cytoplasm</keyword>
<keyword id="KW-0251">Elongation factor</keyword>
<keyword id="KW-0342">GTP-binding</keyword>
<keyword id="KW-0547">Nucleotide-binding</keyword>
<keyword id="KW-0648">Protein biosynthesis</keyword>
<keyword id="KW-1185">Reference proteome</keyword>